<reference key="1">
    <citation type="journal article" date="2004" name="PLoS Biol.">
        <title>Phylogenomics of the reproductive parasite Wolbachia pipientis wMel: a streamlined genome overrun by mobile genetic elements.</title>
        <authorList>
            <person name="Wu M."/>
            <person name="Sun L.V."/>
            <person name="Vamathevan J.J."/>
            <person name="Riegler M."/>
            <person name="DeBoy R.T."/>
            <person name="Brownlie J.C."/>
            <person name="McGraw E.A."/>
            <person name="Martin W."/>
            <person name="Esser C."/>
            <person name="Ahmadinejad N."/>
            <person name="Wiegand C."/>
            <person name="Madupu R."/>
            <person name="Beanan M.J."/>
            <person name="Brinkac L.M."/>
            <person name="Daugherty S.C."/>
            <person name="Durkin A.S."/>
            <person name="Kolonay J.F."/>
            <person name="Nelson W.C."/>
            <person name="Mohamoud Y."/>
            <person name="Lee P."/>
            <person name="Berry K.J."/>
            <person name="Young M.B."/>
            <person name="Utterback T.R."/>
            <person name="Weidman J.F."/>
            <person name="Nierman W.C."/>
            <person name="Paulsen I.T."/>
            <person name="Nelson K.E."/>
            <person name="Tettelin H."/>
            <person name="O'Neill S.L."/>
            <person name="Eisen J.A."/>
        </authorList>
    </citation>
    <scope>NUCLEOTIDE SEQUENCE [LARGE SCALE GENOMIC DNA]</scope>
</reference>
<protein>
    <recommendedName>
        <fullName evidence="1">ATP synthase subunit beta</fullName>
        <ecNumber evidence="1">7.1.2.2</ecNumber>
    </recommendedName>
    <alternativeName>
        <fullName evidence="1">ATP synthase F1 sector subunit beta</fullName>
    </alternativeName>
    <alternativeName>
        <fullName evidence="1">F-ATPase subunit beta</fullName>
    </alternativeName>
</protein>
<keyword id="KW-0066">ATP synthesis</keyword>
<keyword id="KW-0067">ATP-binding</keyword>
<keyword id="KW-1003">Cell membrane</keyword>
<keyword id="KW-0139">CF(1)</keyword>
<keyword id="KW-0375">Hydrogen ion transport</keyword>
<keyword id="KW-0406">Ion transport</keyword>
<keyword id="KW-0472">Membrane</keyword>
<keyword id="KW-0547">Nucleotide-binding</keyword>
<keyword id="KW-1278">Translocase</keyword>
<keyword id="KW-0813">Transport</keyword>
<feature type="chain" id="PRO_0000254425" description="ATP synthase subunit beta">
    <location>
        <begin position="1"/>
        <end position="475"/>
    </location>
</feature>
<feature type="binding site" evidence="1">
    <location>
        <begin position="152"/>
        <end position="159"/>
    </location>
    <ligand>
        <name>ATP</name>
        <dbReference type="ChEBI" id="CHEBI:30616"/>
    </ligand>
</feature>
<evidence type="ECO:0000255" key="1">
    <source>
        <dbReference type="HAMAP-Rule" id="MF_01347"/>
    </source>
</evidence>
<gene>
    <name evidence="1" type="primary">atpD</name>
    <name type="ordered locus">WD_0203</name>
</gene>
<proteinExistence type="inferred from homology"/>
<name>ATPB_WOLPM</name>
<sequence>MNIGRAIKVTQAVVDIKFEGELPKIFNALKSKLKYKDKELVLEVSQHIGDNIVRCIAMDSTDGMSRGDEFVDTGAPISVPIGRSTLGRIFNVVGELIDECGPLKGKYNLEPIHRAPPSFTEQRIQEEVLVTGIKVIDLLAPYLKGGKIGLFGGAGVGKTVLIMELINNIAKAHKGFSVFAGVGERTREGNDLYHEMITSNVININEHEKSQAVLVYGQMNEPPGARARVALTALTMAEYFRDRENQDVLFFVDNIFRFTQAGSEISALLGRIPSAVGYQPTLATDMGAMQERIASTTSGSITSVQAIYVPADDLTDPAPATTFSHLDATTVLSRQIAEMGIYPAVDPLDSTSQSLSAEIIGEEHYNVASEVKRILQTYKSLQDIIAILGMDELSDEDKIIVDRARKIQKFLSQPFHVAEIFTGMPGKFVSLSDTVSSFKGIVEGKYDHLPEAAFYMVGNIDEAIKKAELIQAEAK</sequence>
<organism>
    <name type="scientific">Wolbachia pipientis wMel</name>
    <dbReference type="NCBI Taxonomy" id="163164"/>
    <lineage>
        <taxon>Bacteria</taxon>
        <taxon>Pseudomonadati</taxon>
        <taxon>Pseudomonadota</taxon>
        <taxon>Alphaproteobacteria</taxon>
        <taxon>Rickettsiales</taxon>
        <taxon>Anaplasmataceae</taxon>
        <taxon>Wolbachieae</taxon>
        <taxon>Wolbachia</taxon>
    </lineage>
</organism>
<accession>Q73IG3</accession>
<dbReference type="EC" id="7.1.2.2" evidence="1"/>
<dbReference type="EMBL" id="AE017196">
    <property type="protein sequence ID" value="AAS13949.1"/>
    <property type="molecule type" value="Genomic_DNA"/>
</dbReference>
<dbReference type="RefSeq" id="WP_010962432.1">
    <property type="nucleotide sequence ID" value="NZ_OX384529.1"/>
</dbReference>
<dbReference type="SMR" id="Q73IG3"/>
<dbReference type="EnsemblBacteria" id="AAS13949">
    <property type="protein sequence ID" value="AAS13949"/>
    <property type="gene ID" value="WD_0203"/>
</dbReference>
<dbReference type="GeneID" id="70035692"/>
<dbReference type="KEGG" id="wol:WD_0203"/>
<dbReference type="eggNOG" id="COG0055">
    <property type="taxonomic scope" value="Bacteria"/>
</dbReference>
<dbReference type="Proteomes" id="UP000008215">
    <property type="component" value="Chromosome"/>
</dbReference>
<dbReference type="GO" id="GO:0005886">
    <property type="term" value="C:plasma membrane"/>
    <property type="evidence" value="ECO:0007669"/>
    <property type="project" value="UniProtKB-SubCell"/>
</dbReference>
<dbReference type="GO" id="GO:0045259">
    <property type="term" value="C:proton-transporting ATP synthase complex"/>
    <property type="evidence" value="ECO:0007669"/>
    <property type="project" value="UniProtKB-KW"/>
</dbReference>
<dbReference type="GO" id="GO:0005524">
    <property type="term" value="F:ATP binding"/>
    <property type="evidence" value="ECO:0007669"/>
    <property type="project" value="UniProtKB-UniRule"/>
</dbReference>
<dbReference type="GO" id="GO:0016887">
    <property type="term" value="F:ATP hydrolysis activity"/>
    <property type="evidence" value="ECO:0007669"/>
    <property type="project" value="InterPro"/>
</dbReference>
<dbReference type="GO" id="GO:0046933">
    <property type="term" value="F:proton-transporting ATP synthase activity, rotational mechanism"/>
    <property type="evidence" value="ECO:0007669"/>
    <property type="project" value="UniProtKB-UniRule"/>
</dbReference>
<dbReference type="CDD" id="cd18110">
    <property type="entry name" value="ATP-synt_F1_beta_C"/>
    <property type="match status" value="1"/>
</dbReference>
<dbReference type="CDD" id="cd18115">
    <property type="entry name" value="ATP-synt_F1_beta_N"/>
    <property type="match status" value="1"/>
</dbReference>
<dbReference type="CDD" id="cd01133">
    <property type="entry name" value="F1-ATPase_beta_CD"/>
    <property type="match status" value="1"/>
</dbReference>
<dbReference type="FunFam" id="1.10.1140.10:FF:000001">
    <property type="entry name" value="ATP synthase subunit beta"/>
    <property type="match status" value="1"/>
</dbReference>
<dbReference type="FunFam" id="3.40.50.300:FF:000026">
    <property type="entry name" value="ATP synthase subunit beta"/>
    <property type="match status" value="1"/>
</dbReference>
<dbReference type="Gene3D" id="2.40.10.170">
    <property type="match status" value="1"/>
</dbReference>
<dbReference type="Gene3D" id="1.10.1140.10">
    <property type="entry name" value="Bovine Mitochondrial F1-atpase, Atp Synthase Beta Chain, Chain D, domain 3"/>
    <property type="match status" value="1"/>
</dbReference>
<dbReference type="Gene3D" id="3.40.50.300">
    <property type="entry name" value="P-loop containing nucleotide triphosphate hydrolases"/>
    <property type="match status" value="1"/>
</dbReference>
<dbReference type="HAMAP" id="MF_01347">
    <property type="entry name" value="ATP_synth_beta_bact"/>
    <property type="match status" value="1"/>
</dbReference>
<dbReference type="InterPro" id="IPR003593">
    <property type="entry name" value="AAA+_ATPase"/>
</dbReference>
<dbReference type="InterPro" id="IPR055190">
    <property type="entry name" value="ATP-synt_VA_C"/>
</dbReference>
<dbReference type="InterPro" id="IPR005722">
    <property type="entry name" value="ATP_synth_F1_bsu"/>
</dbReference>
<dbReference type="InterPro" id="IPR020003">
    <property type="entry name" value="ATPase_a/bsu_AS"/>
</dbReference>
<dbReference type="InterPro" id="IPR050053">
    <property type="entry name" value="ATPase_alpha/beta_chains"/>
</dbReference>
<dbReference type="InterPro" id="IPR004100">
    <property type="entry name" value="ATPase_F1/V1/A1_a/bsu_N"/>
</dbReference>
<dbReference type="InterPro" id="IPR036121">
    <property type="entry name" value="ATPase_F1/V1/A1_a/bsu_N_sf"/>
</dbReference>
<dbReference type="InterPro" id="IPR000194">
    <property type="entry name" value="ATPase_F1/V1/A1_a/bsu_nucl-bd"/>
</dbReference>
<dbReference type="InterPro" id="IPR024034">
    <property type="entry name" value="ATPase_F1/V1_b/a_C"/>
</dbReference>
<dbReference type="InterPro" id="IPR027417">
    <property type="entry name" value="P-loop_NTPase"/>
</dbReference>
<dbReference type="NCBIfam" id="TIGR01039">
    <property type="entry name" value="atpD"/>
    <property type="match status" value="1"/>
</dbReference>
<dbReference type="PANTHER" id="PTHR15184">
    <property type="entry name" value="ATP SYNTHASE"/>
    <property type="match status" value="1"/>
</dbReference>
<dbReference type="PANTHER" id="PTHR15184:SF71">
    <property type="entry name" value="ATP SYNTHASE SUBUNIT BETA, MITOCHONDRIAL"/>
    <property type="match status" value="1"/>
</dbReference>
<dbReference type="Pfam" id="PF00006">
    <property type="entry name" value="ATP-synt_ab"/>
    <property type="match status" value="1"/>
</dbReference>
<dbReference type="Pfam" id="PF02874">
    <property type="entry name" value="ATP-synt_ab_N"/>
    <property type="match status" value="1"/>
</dbReference>
<dbReference type="Pfam" id="PF22919">
    <property type="entry name" value="ATP-synt_VA_C"/>
    <property type="match status" value="1"/>
</dbReference>
<dbReference type="PIRSF" id="PIRSF039072">
    <property type="entry name" value="ATPase_subunit_beta"/>
    <property type="match status" value="1"/>
</dbReference>
<dbReference type="SMART" id="SM00382">
    <property type="entry name" value="AAA"/>
    <property type="match status" value="1"/>
</dbReference>
<dbReference type="SUPFAM" id="SSF47917">
    <property type="entry name" value="C-terminal domain of alpha and beta subunits of F1 ATP synthase"/>
    <property type="match status" value="1"/>
</dbReference>
<dbReference type="SUPFAM" id="SSF50615">
    <property type="entry name" value="N-terminal domain of alpha and beta subunits of F1 ATP synthase"/>
    <property type="match status" value="1"/>
</dbReference>
<dbReference type="SUPFAM" id="SSF52540">
    <property type="entry name" value="P-loop containing nucleoside triphosphate hydrolases"/>
    <property type="match status" value="1"/>
</dbReference>
<dbReference type="PROSITE" id="PS00152">
    <property type="entry name" value="ATPASE_ALPHA_BETA"/>
    <property type="match status" value="1"/>
</dbReference>
<comment type="function">
    <text evidence="1">Produces ATP from ADP in the presence of a proton gradient across the membrane. The catalytic sites are hosted primarily by the beta subunits.</text>
</comment>
<comment type="catalytic activity">
    <reaction evidence="1">
        <text>ATP + H2O + 4 H(+)(in) = ADP + phosphate + 5 H(+)(out)</text>
        <dbReference type="Rhea" id="RHEA:57720"/>
        <dbReference type="ChEBI" id="CHEBI:15377"/>
        <dbReference type="ChEBI" id="CHEBI:15378"/>
        <dbReference type="ChEBI" id="CHEBI:30616"/>
        <dbReference type="ChEBI" id="CHEBI:43474"/>
        <dbReference type="ChEBI" id="CHEBI:456216"/>
        <dbReference type="EC" id="7.1.2.2"/>
    </reaction>
</comment>
<comment type="subunit">
    <text evidence="1">F-type ATPases have 2 components, CF(1) - the catalytic core - and CF(0) - the membrane proton channel. CF(1) has five subunits: alpha(3), beta(3), gamma(1), delta(1), epsilon(1). CF(0) has three main subunits: a(1), b(2) and c(9-12). The alpha and beta chains form an alternating ring which encloses part of the gamma chain. CF(1) is attached to CF(0) by a central stalk formed by the gamma and epsilon chains, while a peripheral stalk is formed by the delta and b chains.</text>
</comment>
<comment type="subcellular location">
    <subcellularLocation>
        <location evidence="1">Cell membrane</location>
        <topology evidence="1">Peripheral membrane protein</topology>
    </subcellularLocation>
</comment>
<comment type="similarity">
    <text evidence="1">Belongs to the ATPase alpha/beta chains family.</text>
</comment>